<sequence>MIKDSSVQVEGQEKVCLDQWVAHYRTYAAKGRSASYIPALGEINVSQLGICIVKPDGTMIKSGDWEIPFTLQSISKVIGFIAACLSRGISYVLERVDVEPTGDAFNSIIRLEIHKPGKPFNPMINAGAITIASLLPGTSVQEKLESIYVLIEKMIEKRPAINEIVFQSEWETAHRNRALAYYLKENGFLESDVEETLEVYLKQCSIEINTEDIALIGLILAHDGYHPIRKEQVLPKEVARLTKALMLTCGMYNASGKFAAFIGLPAKSGVSGGIMTLVPSKSRKDLSFQDGCGIGIYGPAIDEYGNSLPGIMLLEHIAKEWDLSIF</sequence>
<proteinExistence type="inferred from homology"/>
<dbReference type="EC" id="3.5.1.2" evidence="1"/>
<dbReference type="EMBL" id="AE016879">
    <property type="protein sequence ID" value="AAP26958.1"/>
    <property type="molecule type" value="Genomic_DNA"/>
</dbReference>
<dbReference type="EMBL" id="AE017334">
    <property type="protein sequence ID" value="AAT32270.1"/>
    <property type="molecule type" value="Genomic_DNA"/>
</dbReference>
<dbReference type="EMBL" id="AE017225">
    <property type="protein sequence ID" value="AAT55241.1"/>
    <property type="molecule type" value="Genomic_DNA"/>
</dbReference>
<dbReference type="RefSeq" id="NP_845472.1">
    <property type="nucleotide sequence ID" value="NC_003997.3"/>
</dbReference>
<dbReference type="RefSeq" id="YP_029190.1">
    <property type="nucleotide sequence ID" value="NC_005945.1"/>
</dbReference>
<dbReference type="SMR" id="Q81NN0"/>
<dbReference type="IntAct" id="Q81NN0">
    <property type="interactions" value="3"/>
</dbReference>
<dbReference type="STRING" id="261594.GBAA_3155"/>
<dbReference type="DNASU" id="1086611"/>
<dbReference type="KEGG" id="ban:BA_3155"/>
<dbReference type="KEGG" id="banh:HYU01_15545"/>
<dbReference type="KEGG" id="bar:GBAA_3155"/>
<dbReference type="KEGG" id="bat:BAS2932"/>
<dbReference type="PATRIC" id="fig|198094.11.peg.3138"/>
<dbReference type="eggNOG" id="COG2066">
    <property type="taxonomic scope" value="Bacteria"/>
</dbReference>
<dbReference type="HOGENOM" id="CLU_027932_1_0_9"/>
<dbReference type="OMA" id="NALMQTC"/>
<dbReference type="OrthoDB" id="9788822at2"/>
<dbReference type="Proteomes" id="UP000000427">
    <property type="component" value="Chromosome"/>
</dbReference>
<dbReference type="Proteomes" id="UP000000594">
    <property type="component" value="Chromosome"/>
</dbReference>
<dbReference type="GO" id="GO:0004359">
    <property type="term" value="F:glutaminase activity"/>
    <property type="evidence" value="ECO:0007669"/>
    <property type="project" value="UniProtKB-UniRule"/>
</dbReference>
<dbReference type="GO" id="GO:0006537">
    <property type="term" value="P:glutamate biosynthetic process"/>
    <property type="evidence" value="ECO:0007669"/>
    <property type="project" value="TreeGrafter"/>
</dbReference>
<dbReference type="GO" id="GO:0006543">
    <property type="term" value="P:glutamine catabolic process"/>
    <property type="evidence" value="ECO:0007669"/>
    <property type="project" value="TreeGrafter"/>
</dbReference>
<dbReference type="FunFam" id="1.10.1500.10:FF:000001">
    <property type="entry name" value="Glutaminase"/>
    <property type="match status" value="1"/>
</dbReference>
<dbReference type="FunFam" id="3.40.710.10:FF:000005">
    <property type="entry name" value="Glutaminase"/>
    <property type="match status" value="1"/>
</dbReference>
<dbReference type="Gene3D" id="1.10.1500.10">
    <property type="match status" value="1"/>
</dbReference>
<dbReference type="Gene3D" id="3.40.710.10">
    <property type="entry name" value="DD-peptidase/beta-lactamase superfamily"/>
    <property type="match status" value="1"/>
</dbReference>
<dbReference type="HAMAP" id="MF_00313">
    <property type="entry name" value="Glutaminase"/>
    <property type="match status" value="1"/>
</dbReference>
<dbReference type="InterPro" id="IPR012338">
    <property type="entry name" value="Beta-lactam/transpept-like"/>
</dbReference>
<dbReference type="InterPro" id="IPR015868">
    <property type="entry name" value="Glutaminase"/>
</dbReference>
<dbReference type="NCBIfam" id="TIGR03814">
    <property type="entry name" value="Gln_ase"/>
    <property type="match status" value="1"/>
</dbReference>
<dbReference type="NCBIfam" id="NF009021">
    <property type="entry name" value="PRK12357.1"/>
    <property type="match status" value="1"/>
</dbReference>
<dbReference type="PANTHER" id="PTHR12544">
    <property type="entry name" value="GLUTAMINASE"/>
    <property type="match status" value="1"/>
</dbReference>
<dbReference type="PANTHER" id="PTHR12544:SF32">
    <property type="entry name" value="GLUTAMINASE 1"/>
    <property type="match status" value="1"/>
</dbReference>
<dbReference type="Pfam" id="PF04960">
    <property type="entry name" value="Glutaminase"/>
    <property type="match status" value="1"/>
</dbReference>
<dbReference type="SUPFAM" id="SSF56601">
    <property type="entry name" value="beta-lactamase/transpeptidase-like"/>
    <property type="match status" value="1"/>
</dbReference>
<gene>
    <name evidence="1" type="primary">glsA2</name>
    <name type="synonym">glsA-2</name>
    <name type="ordered locus">BA_3155</name>
    <name type="ordered locus">GBAA_3155</name>
    <name type="ordered locus">BAS2932</name>
</gene>
<evidence type="ECO:0000255" key="1">
    <source>
        <dbReference type="HAMAP-Rule" id="MF_00313"/>
    </source>
</evidence>
<keyword id="KW-0378">Hydrolase</keyword>
<keyword id="KW-1185">Reference proteome</keyword>
<organism>
    <name type="scientific">Bacillus anthracis</name>
    <dbReference type="NCBI Taxonomy" id="1392"/>
    <lineage>
        <taxon>Bacteria</taxon>
        <taxon>Bacillati</taxon>
        <taxon>Bacillota</taxon>
        <taxon>Bacilli</taxon>
        <taxon>Bacillales</taxon>
        <taxon>Bacillaceae</taxon>
        <taxon>Bacillus</taxon>
        <taxon>Bacillus cereus group</taxon>
    </lineage>
</organism>
<protein>
    <recommendedName>
        <fullName evidence="1">Glutaminase 2</fullName>
        <ecNumber evidence="1">3.5.1.2</ecNumber>
    </recommendedName>
</protein>
<name>GLSA2_BACAN</name>
<reference key="1">
    <citation type="journal article" date="2003" name="Nature">
        <title>The genome sequence of Bacillus anthracis Ames and comparison to closely related bacteria.</title>
        <authorList>
            <person name="Read T.D."/>
            <person name="Peterson S.N."/>
            <person name="Tourasse N.J."/>
            <person name="Baillie L.W."/>
            <person name="Paulsen I.T."/>
            <person name="Nelson K.E."/>
            <person name="Tettelin H."/>
            <person name="Fouts D.E."/>
            <person name="Eisen J.A."/>
            <person name="Gill S.R."/>
            <person name="Holtzapple E.K."/>
            <person name="Okstad O.A."/>
            <person name="Helgason E."/>
            <person name="Rilstone J."/>
            <person name="Wu M."/>
            <person name="Kolonay J.F."/>
            <person name="Beanan M.J."/>
            <person name="Dodson R.J."/>
            <person name="Brinkac L.M."/>
            <person name="Gwinn M.L."/>
            <person name="DeBoy R.T."/>
            <person name="Madpu R."/>
            <person name="Daugherty S.C."/>
            <person name="Durkin A.S."/>
            <person name="Haft D.H."/>
            <person name="Nelson W.C."/>
            <person name="Peterson J.D."/>
            <person name="Pop M."/>
            <person name="Khouri H.M."/>
            <person name="Radune D."/>
            <person name="Benton J.L."/>
            <person name="Mahamoud Y."/>
            <person name="Jiang L."/>
            <person name="Hance I.R."/>
            <person name="Weidman J.F."/>
            <person name="Berry K.J."/>
            <person name="Plaut R.D."/>
            <person name="Wolf A.M."/>
            <person name="Watkins K.L."/>
            <person name="Nierman W.C."/>
            <person name="Hazen A."/>
            <person name="Cline R.T."/>
            <person name="Redmond C."/>
            <person name="Thwaite J.E."/>
            <person name="White O."/>
            <person name="Salzberg S.L."/>
            <person name="Thomason B."/>
            <person name="Friedlander A.M."/>
            <person name="Koehler T.M."/>
            <person name="Hanna P.C."/>
            <person name="Kolstoe A.-B."/>
            <person name="Fraser C.M."/>
        </authorList>
    </citation>
    <scope>NUCLEOTIDE SEQUENCE [LARGE SCALE GENOMIC DNA]</scope>
    <source>
        <strain>Ames / isolate Porton</strain>
    </source>
</reference>
<reference key="2">
    <citation type="journal article" date="2009" name="J. Bacteriol.">
        <title>The complete genome sequence of Bacillus anthracis Ames 'Ancestor'.</title>
        <authorList>
            <person name="Ravel J."/>
            <person name="Jiang L."/>
            <person name="Stanley S.T."/>
            <person name="Wilson M.R."/>
            <person name="Decker R.S."/>
            <person name="Read T.D."/>
            <person name="Worsham P."/>
            <person name="Keim P.S."/>
            <person name="Salzberg S.L."/>
            <person name="Fraser-Liggett C.M."/>
            <person name="Rasko D.A."/>
        </authorList>
    </citation>
    <scope>NUCLEOTIDE SEQUENCE [LARGE SCALE GENOMIC DNA]</scope>
    <source>
        <strain>Ames ancestor</strain>
    </source>
</reference>
<reference key="3">
    <citation type="submission" date="2004-01" db="EMBL/GenBank/DDBJ databases">
        <title>Complete genome sequence of Bacillus anthracis Sterne.</title>
        <authorList>
            <person name="Brettin T.S."/>
            <person name="Bruce D."/>
            <person name="Challacombe J.F."/>
            <person name="Gilna P."/>
            <person name="Han C."/>
            <person name="Hill K."/>
            <person name="Hitchcock P."/>
            <person name="Jackson P."/>
            <person name="Keim P."/>
            <person name="Longmire J."/>
            <person name="Lucas S."/>
            <person name="Okinaka R."/>
            <person name="Richardson P."/>
            <person name="Rubin E."/>
            <person name="Tice H."/>
        </authorList>
    </citation>
    <scope>NUCLEOTIDE SEQUENCE [LARGE SCALE GENOMIC DNA]</scope>
    <source>
        <strain>Sterne</strain>
    </source>
</reference>
<feature type="chain" id="PRO_0000110589" description="Glutaminase 2">
    <location>
        <begin position="1"/>
        <end position="326"/>
    </location>
</feature>
<feature type="binding site" evidence="1">
    <location>
        <position position="73"/>
    </location>
    <ligand>
        <name>substrate</name>
    </ligand>
</feature>
<feature type="binding site" evidence="1">
    <location>
        <position position="125"/>
    </location>
    <ligand>
        <name>substrate</name>
    </ligand>
</feature>
<feature type="binding site" evidence="1">
    <location>
        <position position="169"/>
    </location>
    <ligand>
        <name>substrate</name>
    </ligand>
</feature>
<feature type="binding site" evidence="1">
    <location>
        <position position="176"/>
    </location>
    <ligand>
        <name>substrate</name>
    </ligand>
</feature>
<feature type="binding site" evidence="1">
    <location>
        <position position="200"/>
    </location>
    <ligand>
        <name>substrate</name>
    </ligand>
</feature>
<feature type="binding site" evidence="1">
    <location>
        <position position="252"/>
    </location>
    <ligand>
        <name>substrate</name>
    </ligand>
</feature>
<feature type="binding site" evidence="1">
    <location>
        <position position="270"/>
    </location>
    <ligand>
        <name>substrate</name>
    </ligand>
</feature>
<accession>Q81NN0</accession>
<accession>Q6HWU8</accession>
<accession>Q6KQY6</accession>
<comment type="catalytic activity">
    <reaction evidence="1">
        <text>L-glutamine + H2O = L-glutamate + NH4(+)</text>
        <dbReference type="Rhea" id="RHEA:15889"/>
        <dbReference type="ChEBI" id="CHEBI:15377"/>
        <dbReference type="ChEBI" id="CHEBI:28938"/>
        <dbReference type="ChEBI" id="CHEBI:29985"/>
        <dbReference type="ChEBI" id="CHEBI:58359"/>
        <dbReference type="EC" id="3.5.1.2"/>
    </reaction>
</comment>
<comment type="subunit">
    <text evidence="1">Homotetramer.</text>
</comment>
<comment type="similarity">
    <text evidence="1">Belongs to the glutaminase family.</text>
</comment>